<organism>
    <name type="scientific">Sulfurisphaera tokodaii (strain DSM 16993 / JCM 10545 / NBRC 100140 / 7)</name>
    <name type="common">Sulfolobus tokodaii</name>
    <dbReference type="NCBI Taxonomy" id="273063"/>
    <lineage>
        <taxon>Archaea</taxon>
        <taxon>Thermoproteota</taxon>
        <taxon>Thermoprotei</taxon>
        <taxon>Sulfolobales</taxon>
        <taxon>Sulfolobaceae</taxon>
        <taxon>Sulfurisphaera</taxon>
    </lineage>
</organism>
<name>IF6_SULTO</name>
<comment type="function">
    <text evidence="1">Binds to the 50S ribosomal subunit and prevents its association with the 30S ribosomal subunit to form the 70S initiation complex.</text>
</comment>
<comment type="similarity">
    <text evidence="1">Belongs to the eIF-6 family.</text>
</comment>
<accession>Q971I4</accession>
<protein>
    <recommendedName>
        <fullName evidence="1">Translation initiation factor 6</fullName>
        <shortName evidence="1">aIF-6</shortName>
    </recommendedName>
</protein>
<sequence length="223" mass="24591">MIIDKLTIFGTDNIGIYIFTNDKYTIVPKNLDVETIQKIQETFKTEIIQTTIAKSFLIGIFVAGNNNVILLPRNVDDEEVKKIKDIARDVRVEILDIRPTALGNIILTNSYGALIYPELSSIEFKKIKESLQIDNIEKGSIANIITVGSVGVITDKAGLVHIDTTEEELDKLSKLFRVKIDTGTVNFGSAFIHSGLIANRNGVLVGSATTGPEILRIQRAFSD</sequence>
<proteinExistence type="inferred from homology"/>
<reference key="1">
    <citation type="journal article" date="2001" name="DNA Res.">
        <title>Complete genome sequence of an aerobic thermoacidophilic Crenarchaeon, Sulfolobus tokodaii strain7.</title>
        <authorList>
            <person name="Kawarabayasi Y."/>
            <person name="Hino Y."/>
            <person name="Horikawa H."/>
            <person name="Jin-no K."/>
            <person name="Takahashi M."/>
            <person name="Sekine M."/>
            <person name="Baba S."/>
            <person name="Ankai A."/>
            <person name="Kosugi H."/>
            <person name="Hosoyama A."/>
            <person name="Fukui S."/>
            <person name="Nagai Y."/>
            <person name="Nishijima K."/>
            <person name="Otsuka R."/>
            <person name="Nakazawa H."/>
            <person name="Takamiya M."/>
            <person name="Kato Y."/>
            <person name="Yoshizawa T."/>
            <person name="Tanaka T."/>
            <person name="Kudoh Y."/>
            <person name="Yamazaki J."/>
            <person name="Kushida N."/>
            <person name="Oguchi A."/>
            <person name="Aoki K."/>
            <person name="Masuda S."/>
            <person name="Yanagii M."/>
            <person name="Nishimura M."/>
            <person name="Yamagishi A."/>
            <person name="Oshima T."/>
            <person name="Kikuchi H."/>
        </authorList>
    </citation>
    <scope>NUCLEOTIDE SEQUENCE [LARGE SCALE GENOMIC DNA]</scope>
    <source>
        <strain>DSM 16993 / JCM 10545 / NBRC 100140 / 7</strain>
    </source>
</reference>
<dbReference type="EMBL" id="BA000023">
    <property type="protein sequence ID" value="BAB66436.1"/>
    <property type="molecule type" value="Genomic_DNA"/>
</dbReference>
<dbReference type="RefSeq" id="WP_010979414.1">
    <property type="nucleotide sequence ID" value="NC_003106.2"/>
</dbReference>
<dbReference type="SMR" id="Q971I4"/>
<dbReference type="STRING" id="273063.STK_13720"/>
<dbReference type="KEGG" id="sto:STK_13720"/>
<dbReference type="PATRIC" id="fig|273063.9.peg.1569"/>
<dbReference type="eggNOG" id="arCOG04176">
    <property type="taxonomic scope" value="Archaea"/>
</dbReference>
<dbReference type="OrthoDB" id="33582at2157"/>
<dbReference type="Proteomes" id="UP000001015">
    <property type="component" value="Chromosome"/>
</dbReference>
<dbReference type="GO" id="GO:0043022">
    <property type="term" value="F:ribosome binding"/>
    <property type="evidence" value="ECO:0007669"/>
    <property type="project" value="InterPro"/>
</dbReference>
<dbReference type="GO" id="GO:0003743">
    <property type="term" value="F:translation initiation factor activity"/>
    <property type="evidence" value="ECO:0007669"/>
    <property type="project" value="UniProtKB-UniRule"/>
</dbReference>
<dbReference type="GO" id="GO:0042256">
    <property type="term" value="P:cytosolic ribosome assembly"/>
    <property type="evidence" value="ECO:0007669"/>
    <property type="project" value="InterPro"/>
</dbReference>
<dbReference type="Gene3D" id="3.75.10.10">
    <property type="entry name" value="L-arginine/glycine Amidinotransferase, Chain A"/>
    <property type="match status" value="1"/>
</dbReference>
<dbReference type="HAMAP" id="MF_00032">
    <property type="entry name" value="eIF_6"/>
    <property type="match status" value="1"/>
</dbReference>
<dbReference type="InterPro" id="IPR002769">
    <property type="entry name" value="eIF6"/>
</dbReference>
<dbReference type="NCBIfam" id="TIGR00323">
    <property type="entry name" value="eIF-6"/>
    <property type="match status" value="1"/>
</dbReference>
<dbReference type="NCBIfam" id="NF003126">
    <property type="entry name" value="PRK04046.1-1"/>
    <property type="match status" value="1"/>
</dbReference>
<dbReference type="PANTHER" id="PTHR10784">
    <property type="entry name" value="TRANSLATION INITIATION FACTOR 6"/>
    <property type="match status" value="1"/>
</dbReference>
<dbReference type="Pfam" id="PF01912">
    <property type="entry name" value="eIF-6"/>
    <property type="match status" value="1"/>
</dbReference>
<dbReference type="PIRSF" id="PIRSF006413">
    <property type="entry name" value="IF-6"/>
    <property type="match status" value="1"/>
</dbReference>
<dbReference type="SMART" id="SM00654">
    <property type="entry name" value="eIF6"/>
    <property type="match status" value="1"/>
</dbReference>
<dbReference type="SUPFAM" id="SSF55909">
    <property type="entry name" value="Pentein"/>
    <property type="match status" value="1"/>
</dbReference>
<gene>
    <name evidence="1" type="primary">eif6</name>
    <name type="ordered locus">STK_13720</name>
</gene>
<feature type="chain" id="PRO_0000153760" description="Translation initiation factor 6">
    <location>
        <begin position="1"/>
        <end position="223"/>
    </location>
</feature>
<evidence type="ECO:0000255" key="1">
    <source>
        <dbReference type="HAMAP-Rule" id="MF_00032"/>
    </source>
</evidence>
<keyword id="KW-0396">Initiation factor</keyword>
<keyword id="KW-0648">Protein biosynthesis</keyword>
<keyword id="KW-1185">Reference proteome</keyword>